<evidence type="ECO:0000255" key="1">
    <source>
        <dbReference type="HAMAP-Rule" id="MF_01322"/>
    </source>
</evidence>
<evidence type="ECO:0000256" key="2">
    <source>
        <dbReference type="SAM" id="MobiDB-lite"/>
    </source>
</evidence>
<dbReference type="EC" id="2.7.7.6" evidence="1"/>
<dbReference type="EMBL" id="CP000270">
    <property type="protein sequence ID" value="ABE32626.1"/>
    <property type="molecule type" value="Genomic_DNA"/>
</dbReference>
<dbReference type="RefSeq" id="WP_011490058.1">
    <property type="nucleotide sequence ID" value="NC_007951.1"/>
</dbReference>
<dbReference type="SMR" id="Q13TG3"/>
<dbReference type="STRING" id="266265.Bxe_A0307"/>
<dbReference type="KEGG" id="bxb:DR64_2477"/>
<dbReference type="KEGG" id="bxe:Bxe_A0307"/>
<dbReference type="PATRIC" id="fig|266265.5.peg.4319"/>
<dbReference type="eggNOG" id="COG0086">
    <property type="taxonomic scope" value="Bacteria"/>
</dbReference>
<dbReference type="OrthoDB" id="9815296at2"/>
<dbReference type="Proteomes" id="UP000001817">
    <property type="component" value="Chromosome 1"/>
</dbReference>
<dbReference type="GO" id="GO:0000428">
    <property type="term" value="C:DNA-directed RNA polymerase complex"/>
    <property type="evidence" value="ECO:0007669"/>
    <property type="project" value="UniProtKB-KW"/>
</dbReference>
<dbReference type="GO" id="GO:0003677">
    <property type="term" value="F:DNA binding"/>
    <property type="evidence" value="ECO:0007669"/>
    <property type="project" value="UniProtKB-UniRule"/>
</dbReference>
<dbReference type="GO" id="GO:0003899">
    <property type="term" value="F:DNA-directed RNA polymerase activity"/>
    <property type="evidence" value="ECO:0007669"/>
    <property type="project" value="UniProtKB-UniRule"/>
</dbReference>
<dbReference type="GO" id="GO:0000287">
    <property type="term" value="F:magnesium ion binding"/>
    <property type="evidence" value="ECO:0007669"/>
    <property type="project" value="UniProtKB-UniRule"/>
</dbReference>
<dbReference type="GO" id="GO:0008270">
    <property type="term" value="F:zinc ion binding"/>
    <property type="evidence" value="ECO:0007669"/>
    <property type="project" value="UniProtKB-UniRule"/>
</dbReference>
<dbReference type="GO" id="GO:0006351">
    <property type="term" value="P:DNA-templated transcription"/>
    <property type="evidence" value="ECO:0007669"/>
    <property type="project" value="UniProtKB-UniRule"/>
</dbReference>
<dbReference type="CDD" id="cd02655">
    <property type="entry name" value="RNAP_beta'_C"/>
    <property type="match status" value="1"/>
</dbReference>
<dbReference type="CDD" id="cd01609">
    <property type="entry name" value="RNAP_beta'_N"/>
    <property type="match status" value="1"/>
</dbReference>
<dbReference type="FunFam" id="1.10.132.30:FF:000003">
    <property type="entry name" value="DNA-directed RNA polymerase subunit beta"/>
    <property type="match status" value="1"/>
</dbReference>
<dbReference type="FunFam" id="1.10.150.390:FF:000002">
    <property type="entry name" value="DNA-directed RNA polymerase subunit beta"/>
    <property type="match status" value="1"/>
</dbReference>
<dbReference type="FunFam" id="4.10.860.120:FF:000001">
    <property type="entry name" value="DNA-directed RNA polymerase subunit beta"/>
    <property type="match status" value="1"/>
</dbReference>
<dbReference type="Gene3D" id="1.10.132.30">
    <property type="match status" value="1"/>
</dbReference>
<dbReference type="Gene3D" id="1.10.150.390">
    <property type="match status" value="1"/>
</dbReference>
<dbReference type="Gene3D" id="1.10.1790.20">
    <property type="match status" value="1"/>
</dbReference>
<dbReference type="Gene3D" id="1.10.40.90">
    <property type="match status" value="1"/>
</dbReference>
<dbReference type="Gene3D" id="2.40.40.20">
    <property type="match status" value="1"/>
</dbReference>
<dbReference type="Gene3D" id="2.40.50.100">
    <property type="match status" value="3"/>
</dbReference>
<dbReference type="Gene3D" id="4.10.860.120">
    <property type="entry name" value="RNA polymerase II, clamp domain"/>
    <property type="match status" value="1"/>
</dbReference>
<dbReference type="Gene3D" id="1.10.274.100">
    <property type="entry name" value="RNA polymerase Rpb1, domain 3"/>
    <property type="match status" value="1"/>
</dbReference>
<dbReference type="HAMAP" id="MF_01322">
    <property type="entry name" value="RNApol_bact_RpoC"/>
    <property type="match status" value="1"/>
</dbReference>
<dbReference type="InterPro" id="IPR045867">
    <property type="entry name" value="DNA-dir_RpoC_beta_prime"/>
</dbReference>
<dbReference type="InterPro" id="IPR012754">
    <property type="entry name" value="DNA-dir_RpoC_beta_prime_bact"/>
</dbReference>
<dbReference type="InterPro" id="IPR000722">
    <property type="entry name" value="RNA_pol_asu"/>
</dbReference>
<dbReference type="InterPro" id="IPR006592">
    <property type="entry name" value="RNA_pol_N"/>
</dbReference>
<dbReference type="InterPro" id="IPR007080">
    <property type="entry name" value="RNA_pol_Rpb1_1"/>
</dbReference>
<dbReference type="InterPro" id="IPR007066">
    <property type="entry name" value="RNA_pol_Rpb1_3"/>
</dbReference>
<dbReference type="InterPro" id="IPR042102">
    <property type="entry name" value="RNA_pol_Rpb1_3_sf"/>
</dbReference>
<dbReference type="InterPro" id="IPR007083">
    <property type="entry name" value="RNA_pol_Rpb1_4"/>
</dbReference>
<dbReference type="InterPro" id="IPR007081">
    <property type="entry name" value="RNA_pol_Rpb1_5"/>
</dbReference>
<dbReference type="InterPro" id="IPR044893">
    <property type="entry name" value="RNA_pol_Rpb1_clamp_domain"/>
</dbReference>
<dbReference type="InterPro" id="IPR038120">
    <property type="entry name" value="Rpb1_funnel_sf"/>
</dbReference>
<dbReference type="NCBIfam" id="TIGR02386">
    <property type="entry name" value="rpoC_TIGR"/>
    <property type="match status" value="1"/>
</dbReference>
<dbReference type="PANTHER" id="PTHR19376">
    <property type="entry name" value="DNA-DIRECTED RNA POLYMERASE"/>
    <property type="match status" value="1"/>
</dbReference>
<dbReference type="PANTHER" id="PTHR19376:SF54">
    <property type="entry name" value="DNA-DIRECTED RNA POLYMERASE SUBUNIT BETA"/>
    <property type="match status" value="1"/>
</dbReference>
<dbReference type="Pfam" id="PF04997">
    <property type="entry name" value="RNA_pol_Rpb1_1"/>
    <property type="match status" value="1"/>
</dbReference>
<dbReference type="Pfam" id="PF00623">
    <property type="entry name" value="RNA_pol_Rpb1_2"/>
    <property type="match status" value="2"/>
</dbReference>
<dbReference type="Pfam" id="PF04983">
    <property type="entry name" value="RNA_pol_Rpb1_3"/>
    <property type="match status" value="1"/>
</dbReference>
<dbReference type="Pfam" id="PF05000">
    <property type="entry name" value="RNA_pol_Rpb1_4"/>
    <property type="match status" value="1"/>
</dbReference>
<dbReference type="Pfam" id="PF04998">
    <property type="entry name" value="RNA_pol_Rpb1_5"/>
    <property type="match status" value="1"/>
</dbReference>
<dbReference type="SMART" id="SM00663">
    <property type="entry name" value="RPOLA_N"/>
    <property type="match status" value="1"/>
</dbReference>
<dbReference type="SUPFAM" id="SSF64484">
    <property type="entry name" value="beta and beta-prime subunits of DNA dependent RNA-polymerase"/>
    <property type="match status" value="1"/>
</dbReference>
<comment type="function">
    <text evidence="1">DNA-dependent RNA polymerase catalyzes the transcription of DNA into RNA using the four ribonucleoside triphosphates as substrates.</text>
</comment>
<comment type="catalytic activity">
    <reaction evidence="1">
        <text>RNA(n) + a ribonucleoside 5'-triphosphate = RNA(n+1) + diphosphate</text>
        <dbReference type="Rhea" id="RHEA:21248"/>
        <dbReference type="Rhea" id="RHEA-COMP:14527"/>
        <dbReference type="Rhea" id="RHEA-COMP:17342"/>
        <dbReference type="ChEBI" id="CHEBI:33019"/>
        <dbReference type="ChEBI" id="CHEBI:61557"/>
        <dbReference type="ChEBI" id="CHEBI:140395"/>
        <dbReference type="EC" id="2.7.7.6"/>
    </reaction>
</comment>
<comment type="cofactor">
    <cofactor evidence="1">
        <name>Mg(2+)</name>
        <dbReference type="ChEBI" id="CHEBI:18420"/>
    </cofactor>
    <text evidence="1">Binds 1 Mg(2+) ion per subunit.</text>
</comment>
<comment type="cofactor">
    <cofactor evidence="1">
        <name>Zn(2+)</name>
        <dbReference type="ChEBI" id="CHEBI:29105"/>
    </cofactor>
    <text evidence="1">Binds 2 Zn(2+) ions per subunit.</text>
</comment>
<comment type="subunit">
    <text evidence="1">The RNAP catalytic core consists of 2 alpha, 1 beta, 1 beta' and 1 omega subunit. When a sigma factor is associated with the core the holoenzyme is formed, which can initiate transcription.</text>
</comment>
<comment type="similarity">
    <text evidence="1">Belongs to the RNA polymerase beta' chain family.</text>
</comment>
<organism>
    <name type="scientific">Paraburkholderia xenovorans (strain LB400)</name>
    <dbReference type="NCBI Taxonomy" id="266265"/>
    <lineage>
        <taxon>Bacteria</taxon>
        <taxon>Pseudomonadati</taxon>
        <taxon>Pseudomonadota</taxon>
        <taxon>Betaproteobacteria</taxon>
        <taxon>Burkholderiales</taxon>
        <taxon>Burkholderiaceae</taxon>
        <taxon>Paraburkholderia</taxon>
    </lineage>
</organism>
<sequence length="1412" mass="156317">MKALLDLFKQVQQPEVFDAIKIGLASPDKIRSWSFGEVKKPETINYRTFKPERDGLFCAKIFGPIKDYECLCGKYKRLKHRGVICEKCGVEVTLAKVRRERMGHIELASPVAHIWFLKSLPSRLGMVLDMTLRDIERVLYFEAYVVIDPGMTPLKARQIMTEEDYYNKVEEYGDEFRAEMGAEGVRELLRAINIDEQVEMLRTELKNTGSEAKIKKYAKRLKVLEAFQRSGIKPDWMVLEVLPVLPPELRPLVPLDGGRFATSDLNDLYRRVINRNNRLKRLLELKAPEIIVRNEKRMLQEAVDSLLDNGRRGKAMTGANKRPLKSLADMIKGKGGRFRQNLLGKRVDYSGRSVIVVGPTLKLHQCGLPKLMALELFKPFIFNKLEVMGVATTIKAAKKEVENQTPVVWDILEEVIREHPVMLNRAPTLHRLGIQAFEPVLIEGKAIQLHPLVCAAFNADFDGDQMAVHVPLSLEAQMEARTLMLASNNILFPANGDPSIVPSQDIVLGLYYATREAVNAKGEGLTFTGVSEALRAYENKEVELASRVNVRITEMVHNEDKSDGAPAFVPKISLYATTVGRAILSEILPPGLPFSVLNKPLKKKEISRLINTAFRKCGLRETVIFADQLMQSGFRLATRAGISICVDDMLVPPQKETIVGDAAKKVKEYDRQYMSGLVTSQERYNNVVDIWSATSEAVGKAMMEQLSTEPVTDRDGNETRQESFNSIYMMADSGARGSAVQIRQLAGMRGLMAKPDGSIIETPITANFREGLNVLQYFISTHGARKGLADTALKTANSGYLTRRLVDVTQDLVVVEDDCGTSNGVAMKALVEGGEVVEALRDRILGRVTVADVVNPESQETLYETGTLLDEDAVEEIERLGIDEVRVRTPLTCETRYGLCAACYGRDLGRGSSVNVGEAVGVIAAQSIGEPGTQLTMRTFHIGGAASRAAVASSVEAKSNGTVRFTATMRYVTNAKGEQIVISRSGEAMITDDHGRERERHKVPYGATLLQLDGAQIKAGTQLATWDPMTRPIITEYGGTVKFENVEEGVTVAKQIDDVTGLSTLVVIDVKRRGSQASKTVRPQVKLLDANGEEVKIPNTEHSVQIGFQVGALITVKDGQQVQVGEVLARIPTESQKTRDITGGLPRVAELFEARSPKDAGILAEVTGTTSFGKDTKGKQRLVITDLEGNQHEFLIAKEKQVLVHDGQVVNKGEMIVDGPADPHDILRLQGVEALSRYIVDEVQDVYRLQGVKINDKHIEVIVRQMLRRVQITDNGDTRFIPGEQVERSDMLDENDRMIAEDKRPATYENVLLGITKASLSTDSFISAASFQETTRVLTEAAIMGKRDDLRGLKENVIVGRLIPAGTGLAFHKARKSKELSDRERFDQIAAEESFEFGTPETPAAEQQHSGE</sequence>
<keyword id="KW-0240">DNA-directed RNA polymerase</keyword>
<keyword id="KW-0460">Magnesium</keyword>
<keyword id="KW-0479">Metal-binding</keyword>
<keyword id="KW-0548">Nucleotidyltransferase</keyword>
<keyword id="KW-1185">Reference proteome</keyword>
<keyword id="KW-0804">Transcription</keyword>
<keyword id="KW-0808">Transferase</keyword>
<keyword id="KW-0862">Zinc</keyword>
<accession>Q13TG3</accession>
<proteinExistence type="inferred from homology"/>
<reference key="1">
    <citation type="journal article" date="2006" name="Proc. Natl. Acad. Sci. U.S.A.">
        <title>Burkholderia xenovorans LB400 harbors a multi-replicon, 9.73-Mbp genome shaped for versatility.</title>
        <authorList>
            <person name="Chain P.S.G."/>
            <person name="Denef V.J."/>
            <person name="Konstantinidis K.T."/>
            <person name="Vergez L.M."/>
            <person name="Agullo L."/>
            <person name="Reyes V.L."/>
            <person name="Hauser L."/>
            <person name="Cordova M."/>
            <person name="Gomez L."/>
            <person name="Gonzalez M."/>
            <person name="Land M."/>
            <person name="Lao V."/>
            <person name="Larimer F."/>
            <person name="LiPuma J.J."/>
            <person name="Mahenthiralingam E."/>
            <person name="Malfatti S.A."/>
            <person name="Marx C.J."/>
            <person name="Parnell J.J."/>
            <person name="Ramette A."/>
            <person name="Richardson P."/>
            <person name="Seeger M."/>
            <person name="Smith D."/>
            <person name="Spilker T."/>
            <person name="Sul W.J."/>
            <person name="Tsoi T.V."/>
            <person name="Ulrich L.E."/>
            <person name="Zhulin I.B."/>
            <person name="Tiedje J.M."/>
        </authorList>
    </citation>
    <scope>NUCLEOTIDE SEQUENCE [LARGE SCALE GENOMIC DNA]</scope>
    <source>
        <strain>LB400</strain>
    </source>
</reference>
<gene>
    <name evidence="1" type="primary">rpoC</name>
    <name type="ordered locus">Bxeno_A4088</name>
    <name type="ORF">Bxe_A0307</name>
</gene>
<feature type="chain" id="PRO_0000353318" description="DNA-directed RNA polymerase subunit beta'">
    <location>
        <begin position="1"/>
        <end position="1412"/>
    </location>
</feature>
<feature type="region of interest" description="Disordered" evidence="2">
    <location>
        <begin position="1391"/>
        <end position="1412"/>
    </location>
</feature>
<feature type="binding site" evidence="1">
    <location>
        <position position="70"/>
    </location>
    <ligand>
        <name>Zn(2+)</name>
        <dbReference type="ChEBI" id="CHEBI:29105"/>
        <label>1</label>
    </ligand>
</feature>
<feature type="binding site" evidence="1">
    <location>
        <position position="72"/>
    </location>
    <ligand>
        <name>Zn(2+)</name>
        <dbReference type="ChEBI" id="CHEBI:29105"/>
        <label>1</label>
    </ligand>
</feature>
<feature type="binding site" evidence="1">
    <location>
        <position position="85"/>
    </location>
    <ligand>
        <name>Zn(2+)</name>
        <dbReference type="ChEBI" id="CHEBI:29105"/>
        <label>1</label>
    </ligand>
</feature>
<feature type="binding site" evidence="1">
    <location>
        <position position="88"/>
    </location>
    <ligand>
        <name>Zn(2+)</name>
        <dbReference type="ChEBI" id="CHEBI:29105"/>
        <label>1</label>
    </ligand>
</feature>
<feature type="binding site" evidence="1">
    <location>
        <position position="460"/>
    </location>
    <ligand>
        <name>Mg(2+)</name>
        <dbReference type="ChEBI" id="CHEBI:18420"/>
    </ligand>
</feature>
<feature type="binding site" evidence="1">
    <location>
        <position position="462"/>
    </location>
    <ligand>
        <name>Mg(2+)</name>
        <dbReference type="ChEBI" id="CHEBI:18420"/>
    </ligand>
</feature>
<feature type="binding site" evidence="1">
    <location>
        <position position="464"/>
    </location>
    <ligand>
        <name>Mg(2+)</name>
        <dbReference type="ChEBI" id="CHEBI:18420"/>
    </ligand>
</feature>
<feature type="binding site" evidence="1">
    <location>
        <position position="819"/>
    </location>
    <ligand>
        <name>Zn(2+)</name>
        <dbReference type="ChEBI" id="CHEBI:29105"/>
        <label>2</label>
    </ligand>
</feature>
<feature type="binding site" evidence="1">
    <location>
        <position position="893"/>
    </location>
    <ligand>
        <name>Zn(2+)</name>
        <dbReference type="ChEBI" id="CHEBI:29105"/>
        <label>2</label>
    </ligand>
</feature>
<feature type="binding site" evidence="1">
    <location>
        <position position="900"/>
    </location>
    <ligand>
        <name>Zn(2+)</name>
        <dbReference type="ChEBI" id="CHEBI:29105"/>
        <label>2</label>
    </ligand>
</feature>
<feature type="binding site" evidence="1">
    <location>
        <position position="903"/>
    </location>
    <ligand>
        <name>Zn(2+)</name>
        <dbReference type="ChEBI" id="CHEBI:29105"/>
        <label>2</label>
    </ligand>
</feature>
<protein>
    <recommendedName>
        <fullName evidence="1">DNA-directed RNA polymerase subunit beta'</fullName>
        <shortName evidence="1">RNAP subunit beta'</shortName>
        <ecNumber evidence="1">2.7.7.6</ecNumber>
    </recommendedName>
    <alternativeName>
        <fullName evidence="1">RNA polymerase subunit beta'</fullName>
    </alternativeName>
    <alternativeName>
        <fullName evidence="1">Transcriptase subunit beta'</fullName>
    </alternativeName>
</protein>
<name>RPOC_PARXL</name>